<feature type="chain" id="PRO_0000387274" description="Probable inorganic carbon transporter subunit DabA">
    <location>
        <begin position="1"/>
        <end position="810"/>
    </location>
</feature>
<feature type="binding site" evidence="1">
    <location>
        <position position="347"/>
    </location>
    <ligand>
        <name>Zn(2+)</name>
        <dbReference type="ChEBI" id="CHEBI:29105"/>
    </ligand>
</feature>
<feature type="binding site" evidence="1">
    <location>
        <position position="349"/>
    </location>
    <ligand>
        <name>Zn(2+)</name>
        <dbReference type="ChEBI" id="CHEBI:29105"/>
    </ligand>
</feature>
<feature type="binding site" evidence="1">
    <location>
        <position position="509"/>
    </location>
    <ligand>
        <name>Zn(2+)</name>
        <dbReference type="ChEBI" id="CHEBI:29105"/>
    </ligand>
</feature>
<feature type="binding site" evidence="1">
    <location>
        <position position="524"/>
    </location>
    <ligand>
        <name>Zn(2+)</name>
        <dbReference type="ChEBI" id="CHEBI:29105"/>
    </ligand>
</feature>
<sequence>MTTKTLPTLSMQQKNLLLEATRTIAPHWPLDKLIAVNPLWSLVDKPFDDISDELSALAGIKTYMSNETYRAWFDEGKISHHCLTKAAEHYGLNEQDALLEHLSQANNLPDSWRNIADLADQQRPANKMSWHDEITHQVSQFCAAHYQQQSPTLRQQNIDNELDLYSHWLEVTNEDKGLSIVMGEAKLTKFFHNLPTDKDALFALVIEELALDDQSLSFFAKALLLDINGWSSYLAYLNWSKGENNDNLAKDDHVESLLAIKMAWELVVWRYLKHTAPALLSTINTKWMAQKQAIPNLIQAHKDALITSKVWALALEYSEQKSLNQTLTTEPAHNTTQTRPELQAIFCIDVRSEVFRRALEQQSATIQTLGFAGFFGLPIEYKAKDSHYVRPQLPGLLQAAITVTESDSDKGHVHHQQKEARWYRWGHAAPAAFSMVESMGWWYAFKMFKQTLFSKRQEHPANRLAPNTHWQLTQQGVLLTDQDKAHLAKGILDTIKLTTYAPIVMLVGHGSHTSNNLHAAGLECGACGGQSGEVNVRVLASLLNDHKVRTLLNDMGMEIPSDTQFVPALHNTTTDQLTCFDQTKDAKPIDRKIKDWFEKAQFLAQQERAAKLDTALLDASDKQRSKAFSKRANDWSQVNPEWGLANNHSFIIAPRQKTRHLDLEGRSFLHDYDPQNDPDFAILERILTAPMLVTHWINMQYNLSVTDNFKFGCGNKVLHNAVGGNIGVFEGNGGDLRIGLSMQSLNDGQKWMHTPVRLAVYVTAPKSAIEKIAAKHDIVKHLIDNDWLYLFQWEDNKVARFYQQEWHAEK</sequence>
<keyword id="KW-0997">Cell inner membrane</keyword>
<keyword id="KW-1003">Cell membrane</keyword>
<keyword id="KW-0472">Membrane</keyword>
<keyword id="KW-0479">Metal-binding</keyword>
<keyword id="KW-0813">Transport</keyword>
<keyword id="KW-0862">Zinc</keyword>
<dbReference type="EMBL" id="CP000749">
    <property type="protein sequence ID" value="ABR72699.1"/>
    <property type="molecule type" value="Genomic_DNA"/>
</dbReference>
<dbReference type="STRING" id="400668.Mmwyl1_3800"/>
<dbReference type="KEGG" id="mmw:Mmwyl1_3800"/>
<dbReference type="eggNOG" id="COG3002">
    <property type="taxonomic scope" value="Bacteria"/>
</dbReference>
<dbReference type="HOGENOM" id="CLU_009885_1_0_6"/>
<dbReference type="OrthoDB" id="9805101at2"/>
<dbReference type="GO" id="GO:0005886">
    <property type="term" value="C:plasma membrane"/>
    <property type="evidence" value="ECO:0007669"/>
    <property type="project" value="UniProtKB-SubCell"/>
</dbReference>
<dbReference type="GO" id="GO:0008270">
    <property type="term" value="F:zinc ion binding"/>
    <property type="evidence" value="ECO:0007669"/>
    <property type="project" value="UniProtKB-UniRule"/>
</dbReference>
<dbReference type="HAMAP" id="MF_01871">
    <property type="entry name" value="DabA"/>
    <property type="match status" value="1"/>
</dbReference>
<dbReference type="InterPro" id="IPR018752">
    <property type="entry name" value="DabA"/>
</dbReference>
<dbReference type="PANTHER" id="PTHR38344:SF1">
    <property type="entry name" value="INORGANIC CARBON TRANSPORTER SUBUNIT DABA-RELATED"/>
    <property type="match status" value="1"/>
</dbReference>
<dbReference type="PANTHER" id="PTHR38344">
    <property type="entry name" value="UPF0753 PROTEIN AQ_863"/>
    <property type="match status" value="1"/>
</dbReference>
<dbReference type="Pfam" id="PF10070">
    <property type="entry name" value="DabA"/>
    <property type="match status" value="1"/>
</dbReference>
<evidence type="ECO:0000255" key="1">
    <source>
        <dbReference type="HAMAP-Rule" id="MF_01871"/>
    </source>
</evidence>
<name>DABA_MARMS</name>
<organism>
    <name type="scientific">Marinomonas sp. (strain MWYL1)</name>
    <dbReference type="NCBI Taxonomy" id="400668"/>
    <lineage>
        <taxon>Bacteria</taxon>
        <taxon>Pseudomonadati</taxon>
        <taxon>Pseudomonadota</taxon>
        <taxon>Gammaproteobacteria</taxon>
        <taxon>Oceanospirillales</taxon>
        <taxon>Oceanospirillaceae</taxon>
        <taxon>Marinomonas</taxon>
    </lineage>
</organism>
<comment type="function">
    <text evidence="1">Part of an energy-coupled inorganic carbon pump.</text>
</comment>
<comment type="cofactor">
    <cofactor evidence="1">
        <name>Zn(2+)</name>
        <dbReference type="ChEBI" id="CHEBI:29105"/>
    </cofactor>
</comment>
<comment type="subunit">
    <text evidence="1">Forms a complex with DabB.</text>
</comment>
<comment type="subcellular location">
    <subcellularLocation>
        <location evidence="1">Cell inner membrane</location>
        <topology evidence="1">Peripheral membrane protein</topology>
    </subcellularLocation>
</comment>
<comment type="similarity">
    <text evidence="1">Belongs to the inorganic carbon transporter (TC 9.A.2) DabA family.</text>
</comment>
<proteinExistence type="inferred from homology"/>
<protein>
    <recommendedName>
        <fullName evidence="1">Probable inorganic carbon transporter subunit DabA</fullName>
    </recommendedName>
</protein>
<gene>
    <name evidence="1" type="primary">dabA</name>
    <name type="ordered locus">Mmwyl1_3800</name>
</gene>
<accession>A6W1X0</accession>
<reference key="1">
    <citation type="submission" date="2007-06" db="EMBL/GenBank/DDBJ databases">
        <title>Complete sequence of Marinomonas sp. MWYL1.</title>
        <authorList>
            <consortium name="US DOE Joint Genome Institute"/>
            <person name="Copeland A."/>
            <person name="Lucas S."/>
            <person name="Lapidus A."/>
            <person name="Barry K."/>
            <person name="Glavina del Rio T."/>
            <person name="Dalin E."/>
            <person name="Tice H."/>
            <person name="Pitluck S."/>
            <person name="Kiss H."/>
            <person name="Brettin T."/>
            <person name="Bruce D."/>
            <person name="Detter J.C."/>
            <person name="Han C."/>
            <person name="Schmutz J."/>
            <person name="Larimer F."/>
            <person name="Land M."/>
            <person name="Hauser L."/>
            <person name="Kyrpides N."/>
            <person name="Kim E."/>
            <person name="Johnston A.W.B."/>
            <person name="Todd J.D."/>
            <person name="Rogers R."/>
            <person name="Wexler M."/>
            <person name="Bond P.L."/>
            <person name="Li Y."/>
            <person name="Richardson P."/>
        </authorList>
    </citation>
    <scope>NUCLEOTIDE SEQUENCE [LARGE SCALE GENOMIC DNA]</scope>
    <source>
        <strain>MWYL1</strain>
    </source>
</reference>